<feature type="chain" id="PRO_0000157357" description="3-octaprenyl-4-hydroxybenzoate carboxy-lyase">
    <location>
        <begin position="1"/>
        <end position="497"/>
    </location>
</feature>
<feature type="active site" description="Proton acceptor" evidence="1 7">
    <location>
        <position position="290"/>
    </location>
</feature>
<feature type="binding site" evidence="1 3 10 11">
    <location>
        <position position="175"/>
    </location>
    <ligand>
        <name>Mn(2+)</name>
        <dbReference type="ChEBI" id="CHEBI:29035"/>
    </ligand>
</feature>
<feature type="binding site" evidence="1 3 10 11">
    <location>
        <begin position="178"/>
        <end position="180"/>
    </location>
    <ligand>
        <name>prenylated FMN</name>
        <dbReference type="ChEBI" id="CHEBI:87746"/>
    </ligand>
</feature>
<feature type="binding site" evidence="1 3 10 11">
    <location>
        <begin position="192"/>
        <end position="194"/>
    </location>
    <ligand>
        <name>prenylated FMN</name>
        <dbReference type="ChEBI" id="CHEBI:87746"/>
    </ligand>
</feature>
<feature type="binding site" evidence="1 3 10 11">
    <location>
        <begin position="197"/>
        <end position="198"/>
    </location>
    <ligand>
        <name>prenylated FMN</name>
        <dbReference type="ChEBI" id="CHEBI:87746"/>
    </ligand>
</feature>
<feature type="binding site" evidence="1 3 10 11">
    <location>
        <position position="241"/>
    </location>
    <ligand>
        <name>Mn(2+)</name>
        <dbReference type="ChEBI" id="CHEBI:29035"/>
    </ligand>
</feature>
<feature type="sequence variant" description="In AN66; inactive protein." evidence="2">
    <original>G</original>
    <variation>R</variation>
    <location>
        <position position="452"/>
    </location>
</feature>
<feature type="helix" evidence="13">
    <location>
        <begin position="9"/>
        <end position="18"/>
    </location>
</feature>
<feature type="strand" evidence="13">
    <location>
        <begin position="22"/>
        <end position="25"/>
    </location>
</feature>
<feature type="helix" evidence="13">
    <location>
        <begin position="34"/>
        <end position="44"/>
    </location>
</feature>
<feature type="strand" evidence="13">
    <location>
        <begin position="49"/>
        <end position="53"/>
    </location>
</feature>
<feature type="strand" evidence="13">
    <location>
        <begin position="62"/>
        <end position="64"/>
    </location>
</feature>
<feature type="helix" evidence="13">
    <location>
        <begin position="70"/>
        <end position="75"/>
    </location>
</feature>
<feature type="turn" evidence="13">
    <location>
        <begin position="76"/>
        <end position="78"/>
    </location>
</feature>
<feature type="helix" evidence="13">
    <location>
        <begin position="84"/>
        <end position="94"/>
    </location>
</feature>
<feature type="helix" evidence="13">
    <location>
        <begin position="116"/>
        <end position="118"/>
    </location>
</feature>
<feature type="strand" evidence="13">
    <location>
        <begin position="123"/>
        <end position="127"/>
    </location>
</feature>
<feature type="helix" evidence="13">
    <location>
        <begin position="129"/>
        <end position="131"/>
    </location>
</feature>
<feature type="strand" evidence="13">
    <location>
        <begin position="132"/>
        <end position="136"/>
    </location>
</feature>
<feature type="helix" evidence="13">
    <location>
        <begin position="137"/>
        <end position="139"/>
    </location>
</feature>
<feature type="helix" evidence="13">
    <location>
        <begin position="142"/>
        <end position="144"/>
    </location>
</feature>
<feature type="strand" evidence="13">
    <location>
        <begin position="161"/>
        <end position="167"/>
    </location>
</feature>
<feature type="strand" evidence="13">
    <location>
        <begin position="174"/>
        <end position="178"/>
    </location>
</feature>
<feature type="strand" evidence="13">
    <location>
        <begin position="180"/>
        <end position="185"/>
    </location>
</feature>
<feature type="strand" evidence="13">
    <location>
        <begin position="188"/>
        <end position="190"/>
    </location>
</feature>
<feature type="strand" evidence="12">
    <location>
        <begin position="195"/>
        <end position="197"/>
    </location>
</feature>
<feature type="helix" evidence="13">
    <location>
        <begin position="198"/>
        <end position="209"/>
    </location>
</feature>
<feature type="strand" evidence="13">
    <location>
        <begin position="215"/>
        <end position="222"/>
    </location>
</feature>
<feature type="helix" evidence="13">
    <location>
        <begin position="225"/>
        <end position="232"/>
    </location>
</feature>
<feature type="strand" evidence="13">
    <location>
        <begin position="237"/>
        <end position="239"/>
    </location>
</feature>
<feature type="helix" evidence="13">
    <location>
        <begin position="241"/>
        <end position="249"/>
    </location>
</feature>
<feature type="strand" evidence="13">
    <location>
        <begin position="254"/>
        <end position="257"/>
    </location>
</feature>
<feature type="strand" evidence="13">
    <location>
        <begin position="259"/>
        <end position="262"/>
    </location>
</feature>
<feature type="strand" evidence="13">
    <location>
        <begin position="264"/>
        <end position="266"/>
    </location>
</feature>
<feature type="strand" evidence="13">
    <location>
        <begin position="270"/>
        <end position="285"/>
    </location>
</feature>
<feature type="strand" evidence="13">
    <location>
        <begin position="293"/>
        <end position="296"/>
    </location>
</feature>
<feature type="strand" evidence="13">
    <location>
        <begin position="299"/>
        <end position="311"/>
    </location>
</feature>
<feature type="strand" evidence="13">
    <location>
        <begin position="324"/>
        <end position="326"/>
    </location>
</feature>
<feature type="helix" evidence="13">
    <location>
        <begin position="328"/>
        <end position="337"/>
    </location>
</feature>
<feature type="turn" evidence="13">
    <location>
        <begin position="338"/>
        <end position="340"/>
    </location>
</feature>
<feature type="helix" evidence="13">
    <location>
        <begin position="341"/>
        <end position="347"/>
    </location>
</feature>
<feature type="strand" evidence="13">
    <location>
        <begin position="351"/>
        <end position="355"/>
    </location>
</feature>
<feature type="helix" evidence="13">
    <location>
        <begin position="358"/>
        <end position="360"/>
    </location>
</feature>
<feature type="turn" evidence="13">
    <location>
        <begin position="361"/>
        <end position="363"/>
    </location>
</feature>
<feature type="strand" evidence="13">
    <location>
        <begin position="364"/>
        <end position="370"/>
    </location>
</feature>
<feature type="helix" evidence="13">
    <location>
        <begin position="377"/>
        <end position="387"/>
    </location>
</feature>
<feature type="helix" evidence="13">
    <location>
        <begin position="390"/>
        <end position="392"/>
    </location>
</feature>
<feature type="strand" evidence="13">
    <location>
        <begin position="397"/>
        <end position="402"/>
    </location>
</feature>
<feature type="helix" evidence="13">
    <location>
        <begin position="410"/>
        <end position="420"/>
    </location>
</feature>
<feature type="helix" evidence="13">
    <location>
        <begin position="423"/>
        <end position="426"/>
    </location>
</feature>
<feature type="strand" evidence="13">
    <location>
        <begin position="427"/>
        <end position="434"/>
    </location>
</feature>
<feature type="strand" evidence="13">
    <location>
        <begin position="442"/>
        <end position="444"/>
    </location>
</feature>
<feature type="strand" evidence="13">
    <location>
        <begin position="447"/>
        <end position="454"/>
    </location>
</feature>
<feature type="strand" evidence="13">
    <location>
        <begin position="463"/>
        <end position="465"/>
    </location>
</feature>
<feature type="helix" evidence="13">
    <location>
        <begin position="475"/>
        <end position="488"/>
    </location>
</feature>
<dbReference type="EC" id="4.1.1.98" evidence="1 4"/>
<dbReference type="EMBL" id="X65013">
    <property type="protein sequence ID" value="CAA46146.1"/>
    <property type="status" value="ALT_FRAME"/>
    <property type="molecule type" value="Genomic_DNA"/>
</dbReference>
<dbReference type="EMBL" id="M87049">
    <property type="protein sequence ID" value="AAA67639.1"/>
    <property type="status" value="ALT_FRAME"/>
    <property type="molecule type" value="Genomic_DNA"/>
</dbReference>
<dbReference type="EMBL" id="M87049">
    <property type="protein sequence ID" value="AAA67640.1"/>
    <property type="molecule type" value="Genomic_DNA"/>
</dbReference>
<dbReference type="EMBL" id="U00096">
    <property type="protein sequence ID" value="AAC76846.1"/>
    <property type="molecule type" value="Genomic_DNA"/>
</dbReference>
<dbReference type="EMBL" id="AP009048">
    <property type="protein sequence ID" value="BAE77460.1"/>
    <property type="molecule type" value="Genomic_DNA"/>
</dbReference>
<dbReference type="PIR" id="D65189">
    <property type="entry name" value="D65189"/>
</dbReference>
<dbReference type="PIR" id="S20905">
    <property type="entry name" value="S20905"/>
</dbReference>
<dbReference type="PIR" id="S30734">
    <property type="entry name" value="S30734"/>
</dbReference>
<dbReference type="RefSeq" id="NP_418285.1">
    <property type="nucleotide sequence ID" value="NC_000913.3"/>
</dbReference>
<dbReference type="RefSeq" id="WP_000339804.1">
    <property type="nucleotide sequence ID" value="NZ_STEB01000021.1"/>
</dbReference>
<dbReference type="PDB" id="2IDB">
    <property type="method" value="X-ray"/>
    <property type="resolution" value="2.90 A"/>
    <property type="chains" value="A/B/C=1-497"/>
</dbReference>
<dbReference type="PDB" id="5M1B">
    <property type="method" value="X-ray"/>
    <property type="resolution" value="3.15 A"/>
    <property type="chains" value="A/B/C=1-497"/>
</dbReference>
<dbReference type="PDB" id="5M1C">
    <property type="method" value="X-ray"/>
    <property type="resolution" value="2.75 A"/>
    <property type="chains" value="A/B/C=1-497"/>
</dbReference>
<dbReference type="PDB" id="5M1D">
    <property type="method" value="X-ray"/>
    <property type="resolution" value="2.70 A"/>
    <property type="chains" value="A/B/C=1-497"/>
</dbReference>
<dbReference type="PDB" id="5M1E">
    <property type="method" value="X-ray"/>
    <property type="resolution" value="2.62 A"/>
    <property type="chains" value="A/B/C=1-497"/>
</dbReference>
<dbReference type="PDBsum" id="2IDB"/>
<dbReference type="PDBsum" id="5M1B"/>
<dbReference type="PDBsum" id="5M1C"/>
<dbReference type="PDBsum" id="5M1D"/>
<dbReference type="PDBsum" id="5M1E"/>
<dbReference type="SMR" id="P0AAB4"/>
<dbReference type="BioGRID" id="4261466">
    <property type="interactions" value="341"/>
</dbReference>
<dbReference type="BioGRID" id="852623">
    <property type="interactions" value="1"/>
</dbReference>
<dbReference type="DIP" id="DIP-48249N"/>
<dbReference type="FunCoup" id="P0AAB4">
    <property type="interactions" value="515"/>
</dbReference>
<dbReference type="IntAct" id="P0AAB4">
    <property type="interactions" value="4"/>
</dbReference>
<dbReference type="STRING" id="511145.b3843"/>
<dbReference type="jPOST" id="P0AAB4"/>
<dbReference type="PaxDb" id="511145-b3843"/>
<dbReference type="EnsemblBacteria" id="AAC76846">
    <property type="protein sequence ID" value="AAC76846"/>
    <property type="gene ID" value="b3843"/>
</dbReference>
<dbReference type="GeneID" id="93778094"/>
<dbReference type="GeneID" id="948326"/>
<dbReference type="KEGG" id="ecj:JW3819"/>
<dbReference type="KEGG" id="eco:b3843"/>
<dbReference type="KEGG" id="ecoc:C3026_20780"/>
<dbReference type="PATRIC" id="fig|1411691.4.peg.2867"/>
<dbReference type="EchoBASE" id="EB1369"/>
<dbReference type="eggNOG" id="COG0043">
    <property type="taxonomic scope" value="Bacteria"/>
</dbReference>
<dbReference type="HOGENOM" id="CLU_023348_4_1_6"/>
<dbReference type="InParanoid" id="P0AAB4"/>
<dbReference type="OMA" id="DWKDVIW"/>
<dbReference type="OrthoDB" id="9809841at2"/>
<dbReference type="PhylomeDB" id="P0AAB4"/>
<dbReference type="BioCyc" id="EcoCyc:EG11396-MONOMER"/>
<dbReference type="BioCyc" id="MetaCyc:EG11396-MONOMER"/>
<dbReference type="BRENDA" id="4.1.1.98">
    <property type="organism ID" value="2026"/>
</dbReference>
<dbReference type="UniPathway" id="UPA00232"/>
<dbReference type="EvolutionaryTrace" id="P0AAB4"/>
<dbReference type="PRO" id="PR:P0AAB4"/>
<dbReference type="Proteomes" id="UP000000625">
    <property type="component" value="Chromosome"/>
</dbReference>
<dbReference type="GO" id="GO:0005737">
    <property type="term" value="C:cytoplasm"/>
    <property type="evidence" value="ECO:0000318"/>
    <property type="project" value="GO_Central"/>
</dbReference>
<dbReference type="GO" id="GO:0005829">
    <property type="term" value="C:cytosol"/>
    <property type="evidence" value="ECO:0000314"/>
    <property type="project" value="EcoCyc"/>
</dbReference>
<dbReference type="GO" id="GO:0005886">
    <property type="term" value="C:plasma membrane"/>
    <property type="evidence" value="ECO:0007669"/>
    <property type="project" value="UniProtKB-SubCell"/>
</dbReference>
<dbReference type="GO" id="GO:0008694">
    <property type="term" value="F:3-octaprenyl-4-hydroxybenzoate carboxy-lyase activity"/>
    <property type="evidence" value="ECO:0000314"/>
    <property type="project" value="EcoCyc"/>
</dbReference>
<dbReference type="GO" id="GO:0042802">
    <property type="term" value="F:identical protein binding"/>
    <property type="evidence" value="ECO:0000314"/>
    <property type="project" value="EcoCyc"/>
</dbReference>
<dbReference type="GO" id="GO:0030145">
    <property type="term" value="F:manganese ion binding"/>
    <property type="evidence" value="ECO:0000314"/>
    <property type="project" value="EcoCyc"/>
</dbReference>
<dbReference type="GO" id="GO:0120233">
    <property type="term" value="F:prenyl-FMNH2 binding"/>
    <property type="evidence" value="ECO:0000314"/>
    <property type="project" value="EcoCyc"/>
</dbReference>
<dbReference type="GO" id="GO:0034214">
    <property type="term" value="P:protein hexamerization"/>
    <property type="evidence" value="ECO:0000314"/>
    <property type="project" value="EcoCyc"/>
</dbReference>
<dbReference type="GO" id="GO:0006744">
    <property type="term" value="P:ubiquinone biosynthetic process"/>
    <property type="evidence" value="ECO:0000315"/>
    <property type="project" value="EcoCyc"/>
</dbReference>
<dbReference type="FunFam" id="1.20.5.570:FF:000001">
    <property type="entry name" value="3-octaprenyl-4-hydroxybenzoate carboxy-lyase"/>
    <property type="match status" value="1"/>
</dbReference>
<dbReference type="FunFam" id="3.40.1670.10:FF:000001">
    <property type="entry name" value="3-octaprenyl-4-hydroxybenzoate carboxy-lyase"/>
    <property type="match status" value="1"/>
</dbReference>
<dbReference type="Gene3D" id="1.20.5.570">
    <property type="entry name" value="Single helix bin"/>
    <property type="match status" value="1"/>
</dbReference>
<dbReference type="Gene3D" id="3.40.1670.10">
    <property type="entry name" value="UbiD C-terminal domain-like"/>
    <property type="match status" value="1"/>
</dbReference>
<dbReference type="HAMAP" id="MF_01636">
    <property type="entry name" value="UbiD"/>
    <property type="match status" value="1"/>
</dbReference>
<dbReference type="InterPro" id="IPR002830">
    <property type="entry name" value="UbiD"/>
</dbReference>
<dbReference type="InterPro" id="IPR049381">
    <property type="entry name" value="UbiD-like_C"/>
</dbReference>
<dbReference type="InterPro" id="IPR049383">
    <property type="entry name" value="UbiD-like_N"/>
</dbReference>
<dbReference type="InterPro" id="IPR023677">
    <property type="entry name" value="UbiD_bacteria"/>
</dbReference>
<dbReference type="InterPro" id="IPR048304">
    <property type="entry name" value="UbiD_Rift_dom"/>
</dbReference>
<dbReference type="NCBIfam" id="NF008175">
    <property type="entry name" value="PRK10922.1"/>
    <property type="match status" value="1"/>
</dbReference>
<dbReference type="NCBIfam" id="TIGR00148">
    <property type="entry name" value="UbiD family decarboxylase"/>
    <property type="match status" value="1"/>
</dbReference>
<dbReference type="PANTHER" id="PTHR30108">
    <property type="entry name" value="3-OCTAPRENYL-4-HYDROXYBENZOATE CARBOXY-LYASE-RELATED"/>
    <property type="match status" value="1"/>
</dbReference>
<dbReference type="PANTHER" id="PTHR30108:SF17">
    <property type="entry name" value="FERULIC ACID DECARBOXYLASE 1"/>
    <property type="match status" value="1"/>
</dbReference>
<dbReference type="Pfam" id="PF01977">
    <property type="entry name" value="UbiD"/>
    <property type="match status" value="1"/>
</dbReference>
<dbReference type="Pfam" id="PF20696">
    <property type="entry name" value="UbiD_C"/>
    <property type="match status" value="1"/>
</dbReference>
<dbReference type="Pfam" id="PF20695">
    <property type="entry name" value="UbiD_N"/>
    <property type="match status" value="1"/>
</dbReference>
<dbReference type="SUPFAM" id="SSF50475">
    <property type="entry name" value="FMN-binding split barrel"/>
    <property type="match status" value="1"/>
</dbReference>
<dbReference type="SUPFAM" id="SSF143968">
    <property type="entry name" value="UbiD C-terminal domain-like"/>
    <property type="match status" value="1"/>
</dbReference>
<evidence type="ECO:0000255" key="1">
    <source>
        <dbReference type="HAMAP-Rule" id="MF_01636"/>
    </source>
</evidence>
<evidence type="ECO:0000269" key="2">
    <source>
    </source>
</evidence>
<evidence type="ECO:0000269" key="3">
    <source>
    </source>
</evidence>
<evidence type="ECO:0000269" key="4">
    <source>
    </source>
</evidence>
<evidence type="ECO:0000303" key="5">
    <source>
    </source>
</evidence>
<evidence type="ECO:0000305" key="6"/>
<evidence type="ECO:0000305" key="7">
    <source>
    </source>
</evidence>
<evidence type="ECO:0000305" key="8">
    <source>
    </source>
</evidence>
<evidence type="ECO:0000305" key="9">
    <source ref="7"/>
</evidence>
<evidence type="ECO:0007744" key="10">
    <source>
        <dbReference type="PDB" id="5M1D"/>
    </source>
</evidence>
<evidence type="ECO:0007744" key="11">
    <source>
        <dbReference type="PDB" id="5M1E"/>
    </source>
</evidence>
<evidence type="ECO:0007829" key="12">
    <source>
        <dbReference type="PDB" id="2IDB"/>
    </source>
</evidence>
<evidence type="ECO:0007829" key="13">
    <source>
        <dbReference type="PDB" id="5M1D"/>
    </source>
</evidence>
<sequence>MDAMKYNDLRDFLTLLEQQGELKRITLPVDPHLEITEIADRTLRAGGPALLFENPKGYSMPVLCNLFGTPKRVAMGMGQEDVSALREVGKLLAFLKEPEPPKGFRDLFDKLPQFKQVLNMPTKRLRGAPCQQKIVSGDDVDLNRIPIMTCWPEDAAPLITWGLTVTRGPHKERQNLGIYRQQLIGKNKLIMRWLSHRGGALDYQEWCAAHPGERFPVSVALGADPATILGAVTPVPDTLSEYAFAGLLRGTKTEVVKCISNDLEVPASAEIVLEGYIEQGETAPEGPYGDHTGYYNEVDSFPVFTVTHITQREDAIYHSTYTGRPPDEPAVLGVALNEVFVPILQKQFPEIVDFYLPPEGCSYRLAVVTIKKQYAGHAKRVMMGVWSFLRQFMYTKFVIVCDDDVNARDWNDVIWAITTRMDPARDTVLVENTPIDYLDFASPVSGLGSKMGLDATNKWPGETQREWGRPIKKDPDVVAHIDAIWDELAIFNNGKSA</sequence>
<proteinExistence type="evidence at protein level"/>
<protein>
    <recommendedName>
        <fullName evidence="1 5">3-octaprenyl-4-hydroxybenzoate carboxy-lyase</fullName>
        <ecNumber evidence="1 4">4.1.1.98</ecNumber>
    </recommendedName>
    <alternativeName>
        <fullName evidence="1">Polyprenyl p-hydroxybenzoate decarboxylase</fullName>
    </alternativeName>
</protein>
<gene>
    <name evidence="1" type="primary">ubiD</name>
    <name type="synonym">yigC</name>
    <name type="synonym">yigY</name>
    <name type="ordered locus">b3843</name>
    <name type="ordered locus">JW3819</name>
</gene>
<accession>P0AAB4</accession>
<accession>P26615</accession>
<accession>P27861</accession>
<accession>P76767</accession>
<accession>Q2M8E6</accession>
<accession>Q47265</accession>
<accession>Q47714</accession>
<reference key="1">
    <citation type="journal article" date="1992" name="Mol. Microbiol.">
        <title>Escherichia coli HlyT protein, a transcriptional activator of haemolysin synthesis and secretion, is encoded by the rfaH (sfrB) locus required for expression of sex factor and lipopolysaccharide genes.</title>
        <authorList>
            <person name="Bailey M.J.A."/>
            <person name="Koronakis V."/>
            <person name="Schmoll T."/>
            <person name="Hughes C."/>
        </authorList>
    </citation>
    <scope>NUCLEOTIDE SEQUENCE [GENOMIC DNA]</scope>
    <source>
        <strain>5KC</strain>
    </source>
</reference>
<reference key="2">
    <citation type="journal article" date="1992" name="Science">
        <title>Analysis of the Escherichia coli genome: DNA sequence of the region from 84.5 to 86.5 minutes.</title>
        <authorList>
            <person name="Daniels D.L."/>
            <person name="Plunkett G. III"/>
            <person name="Burland V.D."/>
            <person name="Blattner F.R."/>
        </authorList>
    </citation>
    <scope>NUCLEOTIDE SEQUENCE [LARGE SCALE GENOMIC DNA]</scope>
    <source>
        <strain>K12 / MG1655 / ATCC 47076</strain>
    </source>
</reference>
<reference key="3">
    <citation type="journal article" date="1997" name="Science">
        <title>The complete genome sequence of Escherichia coli K-12.</title>
        <authorList>
            <person name="Blattner F.R."/>
            <person name="Plunkett G. III"/>
            <person name="Bloch C.A."/>
            <person name="Perna N.T."/>
            <person name="Burland V."/>
            <person name="Riley M."/>
            <person name="Collado-Vides J."/>
            <person name="Glasner J.D."/>
            <person name="Rode C.K."/>
            <person name="Mayhew G.F."/>
            <person name="Gregor J."/>
            <person name="Davis N.W."/>
            <person name="Kirkpatrick H.A."/>
            <person name="Goeden M.A."/>
            <person name="Rose D.J."/>
            <person name="Mau B."/>
            <person name="Shao Y."/>
        </authorList>
    </citation>
    <scope>NUCLEOTIDE SEQUENCE [LARGE SCALE GENOMIC DNA]</scope>
    <scope>SEQUENCE REVISION</scope>
    <source>
        <strain>K12 / MG1655 / ATCC 47076</strain>
    </source>
</reference>
<reference key="4">
    <citation type="journal article" date="2006" name="Mol. Syst. Biol.">
        <title>Highly accurate genome sequences of Escherichia coli K-12 strains MG1655 and W3110.</title>
        <authorList>
            <person name="Hayashi K."/>
            <person name="Morooka N."/>
            <person name="Yamamoto Y."/>
            <person name="Fujita K."/>
            <person name="Isono K."/>
            <person name="Choi S."/>
            <person name="Ohtsubo E."/>
            <person name="Baba T."/>
            <person name="Wanner B.L."/>
            <person name="Mori H."/>
            <person name="Horiuchi T."/>
        </authorList>
    </citation>
    <scope>NUCLEOTIDE SEQUENCE [LARGE SCALE GENOMIC DNA]</scope>
    <source>
        <strain>K12 / W3110 / ATCC 27325 / DSM 5911</strain>
    </source>
</reference>
<reference key="5">
    <citation type="journal article" date="1976" name="Biochim. Biophys. Acta">
        <title>Membrane-associated reactions in ubiquinone biosynthesis in Escherichia coli. 3-Octaprenyl-4-hydroxybenzoate carboxy-lyase.</title>
        <authorList>
            <person name="Leppik R.A."/>
            <person name="Young I.G."/>
            <person name="Gibson F."/>
        </authorList>
    </citation>
    <scope>FUNCTION</scope>
    <scope>CATALYTIC ACTIVITY</scope>
    <scope>COFACTOR</scope>
    <scope>ACTIVITY REGULATION</scope>
    <scope>PATHWAY</scope>
    <scope>SUBUNIT</scope>
    <scope>SUBCELLULAR LOCATION</scope>
    <source>
        <strain>K12</strain>
    </source>
</reference>
<reference key="6">
    <citation type="journal article" date="2000" name="J. Bacteriol.">
        <title>Identification of the ubiD gene on the Escherichia coli chromosome.</title>
        <authorList>
            <person name="Zhang H."/>
            <person name="Javor G.T."/>
        </authorList>
    </citation>
    <scope>IDENTIFICATION AS UBID</scope>
    <scope>VARIANT AN66 ARG-452</scope>
    <source>
        <strain>K12</strain>
    </source>
</reference>
<reference key="7">
    <citation type="submission" date="2006-09" db="PDB data bank">
        <title>Crystal structure of 3-octaprenyl-4-hydroxybenzoate decarboxylase (UbiD) from Escherichia coli, Northeast structural genomics target ER459.</title>
        <authorList>
            <person name="Zhou W."/>
            <person name="Forouhar F."/>
            <person name="Seetharaman J."/>
            <person name="Fang Y."/>
            <person name="Xiao R."/>
            <person name="Cunningham K."/>
            <person name="Ma L.-C."/>
            <person name="Chen C.X."/>
            <person name="Acton T.B."/>
            <person name="Montelione G.T."/>
            <person name="Hunt J.F."/>
            <person name="Tong L."/>
        </authorList>
    </citation>
    <scope>X-RAY CRYSTALLOGRAPHY (2.90 ANGSTROMS)</scope>
    <scope>SUBUNIT</scope>
</reference>
<reference key="8">
    <citation type="journal article" date="2017" name="J. Biol. Chem.">
        <title>Oxidative maturation and structural characterization of prenylated FMN binding by UbiD, a decarboxylase involved in bacterial ubiquinone biosynthesis.</title>
        <authorList>
            <person name="Marshall S.A."/>
            <person name="Fisher K."/>
            <person name="Ni Cheallaigh A."/>
            <person name="White M.D."/>
            <person name="Payne K.A."/>
            <person name="Parker D.A."/>
            <person name="Rigby S.E."/>
            <person name="Leys D."/>
        </authorList>
    </citation>
    <scope>X-RAY CRYSTALLOGRAPHY (2.70 ANGSTROMS) IN COMPLEX WITH PRENYL-FMN ANALOG AND MANGANESE ION</scope>
    <scope>ACTIVE SITE</scope>
    <scope>COFACTOR</scope>
    <scope>SUBUNIT</scope>
</reference>
<comment type="function">
    <text evidence="1 4">Catalyzes the decarboxylation of 3-octaprenyl-4-hydroxy benzoate to 2-octaprenylphenol, an intermediate step in ubiquinone biosynthesis.</text>
</comment>
<comment type="catalytic activity">
    <reaction evidence="1 4">
        <text>a 4-hydroxy-3-(all-trans-polyprenyl)benzoate + H(+) = a 2-(all-trans-polyprenyl)phenol + CO2</text>
        <dbReference type="Rhea" id="RHEA:41680"/>
        <dbReference type="Rhea" id="RHEA-COMP:9514"/>
        <dbReference type="Rhea" id="RHEA-COMP:9516"/>
        <dbReference type="ChEBI" id="CHEBI:1269"/>
        <dbReference type="ChEBI" id="CHEBI:15378"/>
        <dbReference type="ChEBI" id="CHEBI:16526"/>
        <dbReference type="ChEBI" id="CHEBI:78396"/>
        <dbReference type="EC" id="4.1.1.98"/>
    </reaction>
</comment>
<comment type="cofactor">
    <cofactor evidence="1 3">
        <name>prenylated FMN</name>
        <dbReference type="ChEBI" id="CHEBI:87746"/>
    </cofactor>
    <text evidence="1 3">Binds 1 prenylated FMN per subunit.</text>
</comment>
<comment type="cofactor">
    <cofactor evidence="1 3 4">
        <name>Mn(2+)</name>
        <dbReference type="ChEBI" id="CHEBI:29035"/>
    </cofactor>
</comment>
<comment type="activity regulation">
    <text evidence="4">Requires phospholipid, a metal ion, dithiothreitol and at least one other so far unidentified soluble cofactor for maximal activity. Inhibited by EDTA.</text>
</comment>
<comment type="pathway">
    <text evidence="1 4">Cofactor biosynthesis; ubiquinone biosynthesis.</text>
</comment>
<comment type="subunit">
    <text evidence="1 3 8 9">Homohexamer.</text>
</comment>
<comment type="subcellular location">
    <subcellularLocation>
        <location evidence="1 8">Cell membrane</location>
        <topology evidence="1 8">Peripheral membrane protein</topology>
    </subcellularLocation>
</comment>
<comment type="similarity">
    <text evidence="1">Belongs to the UbiD family.</text>
</comment>
<comment type="sequence caution" evidence="6">
    <conflict type="frameshift">
        <sequence resource="EMBL-CDS" id="AAA67639"/>
    </conflict>
</comment>
<comment type="sequence caution" evidence="6">
    <conflict type="frameshift">
        <sequence resource="EMBL-CDS" id="CAA46146"/>
    </conflict>
</comment>
<organism>
    <name type="scientific">Escherichia coli (strain K12)</name>
    <dbReference type="NCBI Taxonomy" id="83333"/>
    <lineage>
        <taxon>Bacteria</taxon>
        <taxon>Pseudomonadati</taxon>
        <taxon>Pseudomonadota</taxon>
        <taxon>Gammaproteobacteria</taxon>
        <taxon>Enterobacterales</taxon>
        <taxon>Enterobacteriaceae</taxon>
        <taxon>Escherichia</taxon>
    </lineage>
</organism>
<keyword id="KW-0002">3D-structure</keyword>
<keyword id="KW-1003">Cell membrane</keyword>
<keyword id="KW-0210">Decarboxylase</keyword>
<keyword id="KW-0285">Flavoprotein</keyword>
<keyword id="KW-0288">FMN</keyword>
<keyword id="KW-0456">Lyase</keyword>
<keyword id="KW-0464">Manganese</keyword>
<keyword id="KW-0472">Membrane</keyword>
<keyword id="KW-0479">Metal-binding</keyword>
<keyword id="KW-1185">Reference proteome</keyword>
<keyword id="KW-0831">Ubiquinone biosynthesis</keyword>
<name>UBID_ECOLI</name>